<gene>
    <name evidence="19" type="primary">Prkcd</name>
    <name type="synonym">Pkcd</name>
</gene>
<name>KPCD_MOUSE</name>
<evidence type="ECO:0000250" key="1"/>
<evidence type="ECO:0000250" key="2">
    <source>
        <dbReference type="UniProtKB" id="P09215"/>
    </source>
</evidence>
<evidence type="ECO:0000250" key="3">
    <source>
        <dbReference type="UniProtKB" id="Q05655"/>
    </source>
</evidence>
<evidence type="ECO:0000255" key="4">
    <source>
        <dbReference type="PROSITE-ProRule" id="PRU00041"/>
    </source>
</evidence>
<evidence type="ECO:0000255" key="5">
    <source>
        <dbReference type="PROSITE-ProRule" id="PRU00159"/>
    </source>
</evidence>
<evidence type="ECO:0000255" key="6">
    <source>
        <dbReference type="PROSITE-ProRule" id="PRU00226"/>
    </source>
</evidence>
<evidence type="ECO:0000255" key="7">
    <source>
        <dbReference type="PROSITE-ProRule" id="PRU00618"/>
    </source>
</evidence>
<evidence type="ECO:0000255" key="8">
    <source>
        <dbReference type="PROSITE-ProRule" id="PRU10027"/>
    </source>
</evidence>
<evidence type="ECO:0000269" key="9">
    <source>
    </source>
</evidence>
<evidence type="ECO:0000269" key="10">
    <source>
    </source>
</evidence>
<evidence type="ECO:0000269" key="11">
    <source>
    </source>
</evidence>
<evidence type="ECO:0000269" key="12">
    <source>
    </source>
</evidence>
<evidence type="ECO:0000269" key="13">
    <source>
    </source>
</evidence>
<evidence type="ECO:0000269" key="14">
    <source>
    </source>
</evidence>
<evidence type="ECO:0000269" key="15">
    <source>
    </source>
</evidence>
<evidence type="ECO:0000269" key="16">
    <source>
    </source>
</evidence>
<evidence type="ECO:0000303" key="17">
    <source>
    </source>
</evidence>
<evidence type="ECO:0000305" key="18"/>
<evidence type="ECO:0000312" key="19">
    <source>
        <dbReference type="MGI" id="MGI:97598"/>
    </source>
</evidence>
<evidence type="ECO:0007744" key="20">
    <source>
    </source>
</evidence>
<evidence type="ECO:0007744" key="21">
    <source>
    </source>
</evidence>
<evidence type="ECO:0007744" key="22">
    <source>
    </source>
</evidence>
<evidence type="ECO:0007744" key="23">
    <source>
    </source>
</evidence>
<evidence type="ECO:0007744" key="24">
    <source>
    </source>
</evidence>
<evidence type="ECO:0007829" key="25">
    <source>
        <dbReference type="PDB" id="3UFF"/>
    </source>
</evidence>
<reference key="1">
    <citation type="journal article" date="1991" name="Biochemistry">
        <title>Mouse protein kinase C-delta, the major isoform expressed in mouse hemopoietic cells: sequence of the cDNA, expression patterns, and characterization of the protein.</title>
        <authorList>
            <person name="Mischak H."/>
            <person name="Bodenteich A."/>
            <person name="Kolch W."/>
            <person name="Goodnight J."/>
            <person name="Hofer F."/>
            <person name="Mushinski J.F."/>
        </authorList>
    </citation>
    <scope>NUCLEOTIDE SEQUENCE [MRNA] (ISOFORM 1)</scope>
</reference>
<reference key="2">
    <citation type="journal article" date="1991" name="Eur. J. Biochem.">
        <title>Structure and properties of a ubiquitously expressed protein kinase C, nPKC delta.</title>
        <authorList>
            <person name="Mizuno K."/>
            <person name="Kubo K."/>
            <person name="Saido T.C."/>
            <person name="Akita Y."/>
            <person name="Osada S."/>
            <person name="Kuroki T."/>
            <person name="Ohno S."/>
            <person name="Suzuki K."/>
        </authorList>
    </citation>
    <scope>NUCLEOTIDE SEQUENCE [MRNA] (ISOFORM 1)</scope>
    <source>
        <strain>ICR</strain>
        <tissue>Brain</tissue>
    </source>
</reference>
<reference key="3">
    <citation type="submission" date="2000-06" db="EMBL/GenBank/DDBJ databases">
        <title>Intron/exon structure of the murine protein kinase C delta gene.</title>
        <authorList>
            <person name="Wheeler D.L."/>
            <person name="Gillis M.E."/>
            <person name="Verma A.K."/>
        </authorList>
    </citation>
    <scope>NUCLEOTIDE SEQUENCE [GENOMIC DNA / MRNA] (ISOFORM 1)</scope>
    <source>
        <strain>129/SvJ</strain>
    </source>
</reference>
<reference key="4">
    <citation type="journal article" date="2001" name="Biol. Pharm. Bull.">
        <title>Novel protein kinase C delta isoform insensitive to caspase-3.</title>
        <authorList>
            <person name="Sakurai Y."/>
            <person name="Onishi Y."/>
            <person name="Tanimoto Y."/>
            <person name="Kizaki H."/>
        </authorList>
    </citation>
    <scope>NUCLEOTIDE SEQUENCE [MRNA] (ISOFORM 2)</scope>
</reference>
<reference key="5">
    <citation type="journal article" date="1997" name="J. Biol. Chem.">
        <title>A protein kinase Cdelta-binding protein SRBC whose expression is induced by serum starvation.</title>
        <authorList>
            <person name="Izumi Y."/>
            <person name="Hirai S."/>
            <person name="Tamai Y."/>
            <person name="Fujise-Matsuoka A."/>
            <person name="Nishimura Y."/>
            <person name="Ohno S."/>
        </authorList>
    </citation>
    <scope>INTERACTION WITH CAVIN3</scope>
</reference>
<reference key="6">
    <citation type="journal article" date="1998" name="J. Biol. Chem.">
        <title>A novel sphingosine-dependent protein kinase (SDK1) specifically phosphorylates certain isoforms of 14-3-3 protein.</title>
        <authorList>
            <person name="Megidish T."/>
            <person name="Cooper J."/>
            <person name="Zhang L."/>
            <person name="Fu H."/>
            <person name="Hakomori S."/>
        </authorList>
    </citation>
    <scope>FUNCTION</scope>
</reference>
<reference key="7">
    <citation type="journal article" date="2002" name="Nature">
        <title>Protein kinase Cdelta controls self-antigen-induced B-cell tolerance.</title>
        <authorList>
            <person name="Mecklenbraeuker I."/>
            <person name="Saijo K."/>
            <person name="Zheng N.Y."/>
            <person name="Leitges M."/>
            <person name="Tarakhovsky A."/>
        </authorList>
    </citation>
    <scope>FUNCTION</scope>
</reference>
<reference key="8">
    <citation type="journal article" date="1998" name="Science">
        <title>Protein kinase C isotypes controlled by phosphoinositide 3-kinase through the protein kinase PDK1.</title>
        <authorList>
            <person name="Le Good J.A."/>
            <person name="Ziegler W.H."/>
            <person name="Parekh D.B."/>
            <person name="Alessi D.R."/>
            <person name="Cohen P."/>
            <person name="Parker P.J."/>
        </authorList>
    </citation>
    <scope>PHOSPHORYLATION AT THR-505</scope>
</reference>
<reference key="9">
    <citation type="journal article" date="2002" name="Nature">
        <title>Increased proliferation of B cells and auto-immunity in mice lacking protein kinase Cdelta.</title>
        <authorList>
            <person name="Miyamoto A."/>
            <person name="Nakayama K."/>
            <person name="Imaki H."/>
            <person name="Hirose S."/>
            <person name="Jiang Y."/>
            <person name="Abe M."/>
            <person name="Tsukiyama T."/>
            <person name="Nagahama H."/>
            <person name="Ohno S."/>
            <person name="Hatakeyama S."/>
            <person name="Nakayama K.I."/>
        </authorList>
    </citation>
    <scope>DISRUPTION PHENOTYPE</scope>
    <scope>FUNCTION IN B CELL PROLIFERATION</scope>
    <scope>FUNCTION IN B-CELL IMMUNE RESPONSES</scope>
</reference>
<reference key="10">
    <citation type="journal article" date="2007" name="J. Immunol.">
        <title>Quantitative time-resolved phosphoproteomic analysis of mast cell signaling.</title>
        <authorList>
            <person name="Cao L."/>
            <person name="Yu K."/>
            <person name="Banh C."/>
            <person name="Nguyen V."/>
            <person name="Ritz A."/>
            <person name="Raphael B.J."/>
            <person name="Kawakami Y."/>
            <person name="Kawakami T."/>
            <person name="Salomon A.R."/>
        </authorList>
    </citation>
    <scope>PHOSPHORYLATION [LARGE SCALE ANALYSIS] AT TYR-311</scope>
    <scope>IDENTIFICATION BY MASS SPECTROMETRY [LARGE SCALE ANALYSIS]</scope>
    <source>
        <tissue>Mast cell</tissue>
    </source>
</reference>
<reference key="11">
    <citation type="journal article" date="2007" name="J. Immunol.">
        <title>A critical role of protein kinase C delta activation loop phosphorylation in formyl-methionyl-leucyl-phenylalanine-induced phosphorylation of p47(phox) and rapid activation of nicotinamide adenine dinucleotide phosphate oxidase.</title>
        <authorList>
            <person name="Cheng N."/>
            <person name="He R."/>
            <person name="Tian J."/>
            <person name="Dinauer M.C."/>
            <person name="Ye R.D."/>
        </authorList>
    </citation>
    <scope>FUNCTION</scope>
    <scope>PHOSPHORYLATION AT THR-505</scope>
</reference>
<reference key="12">
    <citation type="journal article" date="2008" name="J. Proteome Res.">
        <title>Large-scale identification and evolution indexing of tyrosine phosphorylation sites from murine brain.</title>
        <authorList>
            <person name="Ballif B.A."/>
            <person name="Carey G.R."/>
            <person name="Sunyaev S.R."/>
            <person name="Gygi S.P."/>
        </authorList>
    </citation>
    <scope>PHOSPHORYLATION [LARGE SCALE ANALYSIS] AT TYR-311</scope>
    <scope>IDENTIFICATION BY MASS SPECTROMETRY [LARGE SCALE ANALYSIS]</scope>
    <source>
        <tissue>Brain</tissue>
    </source>
</reference>
<reference key="13">
    <citation type="journal article" date="2009" name="Immunity">
        <title>The phagosomal proteome in interferon-gamma-activated macrophages.</title>
        <authorList>
            <person name="Trost M."/>
            <person name="English L."/>
            <person name="Lemieux S."/>
            <person name="Courcelles M."/>
            <person name="Desjardins M."/>
            <person name="Thibault P."/>
        </authorList>
    </citation>
    <scope>PHOSPHORYLATION [LARGE SCALE ANALYSIS] AT THR-43; TYR-311 AND SER-662</scope>
    <scope>IDENTIFICATION BY MASS SPECTROMETRY [LARGE SCALE ANALYSIS]</scope>
</reference>
<reference key="14">
    <citation type="journal article" date="2009" name="Mol. Cell. Proteomics">
        <title>Large scale localization of protein phosphorylation by use of electron capture dissociation mass spectrometry.</title>
        <authorList>
            <person name="Sweet S.M."/>
            <person name="Bailey C.M."/>
            <person name="Cunningham D.L."/>
            <person name="Heath J.K."/>
            <person name="Cooper H.J."/>
        </authorList>
    </citation>
    <scope>PHOSPHORYLATION [LARGE SCALE ANALYSIS] AT TYR-311</scope>
    <scope>IDENTIFICATION BY MASS SPECTROMETRY [LARGE SCALE ANALYSIS]</scope>
    <source>
        <tissue>Embryonic fibroblast</tissue>
    </source>
</reference>
<reference key="15">
    <citation type="journal article" date="2010" name="Cell">
        <title>A tissue-specific atlas of mouse protein phosphorylation and expression.</title>
        <authorList>
            <person name="Huttlin E.L."/>
            <person name="Jedrychowski M.P."/>
            <person name="Elias J.E."/>
            <person name="Goswami T."/>
            <person name="Rad R."/>
            <person name="Beausoleil S.A."/>
            <person name="Villen J."/>
            <person name="Haas W."/>
            <person name="Sowa M.E."/>
            <person name="Gygi S.P."/>
        </authorList>
    </citation>
    <scope>PHOSPHORYLATION [LARGE SCALE ANALYSIS] AT TYR-311; THR-505; SER-643 AND SER-662</scope>
    <scope>IDENTIFICATION BY MASS SPECTROMETRY [LARGE SCALE ANALYSIS]</scope>
    <source>
        <tissue>Brain</tissue>
        <tissue>Kidney</tissue>
        <tissue>Lung</tissue>
        <tissue>Pancreas</tissue>
        <tissue>Spleen</tissue>
        <tissue>Testis</tissue>
    </source>
</reference>
<reference key="16">
    <citation type="journal article" date="2010" name="J. Biol. Chem.">
        <title>The protein kinase Cdelta catalytic fragment is critical for maintenance of the G2/M DNA damage checkpoint.</title>
        <authorList>
            <person name="LaGory E.L."/>
            <person name="Sitailo L.A."/>
            <person name="Denning M.F."/>
        </authorList>
    </citation>
    <scope>FUNCTION IN PHOSPHORYLATION OF CDK1</scope>
</reference>
<reference key="17">
    <citation type="journal article" date="2012" name="Immunity">
        <title>Syk kinase-coupled C-type lectin receptors engage protein kinase C-delta to elicit Card9 adaptor-mediated innate immunity.</title>
        <authorList>
            <person name="Strasser D."/>
            <person name="Neumann K."/>
            <person name="Bergmann H."/>
            <person name="Marakalala M.J."/>
            <person name="Guler R."/>
            <person name="Rojowska A."/>
            <person name="Hopfner K.P."/>
            <person name="Brombacher F."/>
            <person name="Urlaub H."/>
            <person name="Baier G."/>
            <person name="Brown G.D."/>
            <person name="Leitges M."/>
            <person name="Ruland J."/>
        </authorList>
    </citation>
    <scope>FUNCTION IN PHOSPHORYLATION OF CARD9</scope>
    <scope>CATALYTIC ACTIVITY</scope>
    <scope>PHOSPHORYLATION AT TYR-311</scope>
</reference>
<reference key="18">
    <citation type="journal article" date="1995" name="Cell">
        <title>Crystal structure of the cys2 activator-binding domain of protein kinase C delta in complex with phorbol ester.</title>
        <authorList>
            <person name="Zhang G."/>
            <person name="Kazanietz M.G."/>
            <person name="Blumberg P.M."/>
            <person name="Hurley J.H."/>
        </authorList>
    </citation>
    <scope>X-RAY CRYSTALLOGRAPHY (1.95 ANGSTROMS) OF 231-280 IN COMPLEX WITH PHORBOL ESTER AND ZINC IONS</scope>
</reference>
<proteinExistence type="evidence at protein level"/>
<keyword id="KW-0002">3D-structure</keyword>
<keyword id="KW-0025">Alternative splicing</keyword>
<keyword id="KW-0053">Apoptosis</keyword>
<keyword id="KW-0067">ATP-binding</keyword>
<keyword id="KW-0131">Cell cycle</keyword>
<keyword id="KW-1003">Cell membrane</keyword>
<keyword id="KW-0963">Cytoplasm</keyword>
<keyword id="KW-0418">Kinase</keyword>
<keyword id="KW-0472">Membrane</keyword>
<keyword id="KW-0479">Metal-binding</keyword>
<keyword id="KW-0496">Mitochondrion</keyword>
<keyword id="KW-0547">Nucleotide-binding</keyword>
<keyword id="KW-0539">Nucleus</keyword>
<keyword id="KW-0597">Phosphoprotein</keyword>
<keyword id="KW-1185">Reference proteome</keyword>
<keyword id="KW-0677">Repeat</keyword>
<keyword id="KW-0723">Serine/threonine-protein kinase</keyword>
<keyword id="KW-0808">Transferase</keyword>
<keyword id="KW-0043">Tumor suppressor</keyword>
<keyword id="KW-0862">Zinc</keyword>
<keyword id="KW-0863">Zinc-finger</keyword>
<accession>P28867</accession>
<accession>Q91V85</accession>
<accession>Q9Z333</accession>
<comment type="function">
    <text evidence="3 9 10 11 12 15">Calcium-independent, phospholipid- and diacylglycerol (DAG)-dependent serine/threonine-protein kinase that plays contrasting roles in cell death and cell survival by functioning as a pro-apoptotic protein during DNA damage-induced apoptosis, but acting as an anti-apoptotic protein during cytokine receptor-initiated cell death, is involved in tumor suppression, is required for oxygen radical production by NADPH oxidase and acts as a positive or negative regulator in platelet functional responses. Negatively regulates B cell proliferation and also has an important function in self-antigen induced B cell tolerance induction (PubMed:11976686, PubMed:11976687). Upon DNA damage, activates the promoter of the death-promoting transcription factor BCLAF1/Btf to trigger BCLAF1-mediated p53/TP53 gene transcription and apoptosis. In response to oxidative stress, interact with and activate CHUK/IKKA in the nucleus, causing the phosphorylation of p53/TP53. In the case of ER stress or DNA damage-induced apoptosis, can form a complex with the tyrosine-protein kinase ABL1 which trigger apoptosis independently of p53/TP53. In cytosol can trigger apoptosis by activating MAPK11 or MAPK14, inhibiting AKT1 and decreasing the level of X-linked inhibitor of apoptosis protein (XIAP), whereas in nucleus induces apoptosis via the activation of MAPK8 or MAPK9. Upon ionizing radiation treatment, is required for the activation of the apoptosis regulators BAX and BAK, which trigger the mitochondrial cell death pathway. Can phosphorylate MCL1 and target it for degradation which is sufficient to trigger for BAX activation and apoptosis. Is required for the control of cell cycle progression both at G1/S and G2/M phases. Mediates phorbol 12-myristate 13-acetate (PMA)-induced inhibition of cell cycle progression at G1/S phase by up-regulating the CDK inhibitor CDKN1A/p21 and inhibiting the cyclin CCNA2 promoter activity. In response to UV irradiation can phosphorylate CDK1, which is important for the G2/M DNA damage checkpoint activation (PubMed:19917613). Can protect glioma cells from the apoptosis induced by TNFSF10/TRAIL, probably by inducing increased phosphorylation and subsequent activation of AKT1. Can also act as tumor suppressor upon mitogenic stimulation with PMA or TPA (By similarity). In N-formyl-methionyl-leucyl-phenylalanine (fMLP)-treated cells, is required for NCF1 (p47-phox) phosphorylation and activation of NADPH oxidase activity, and regulates TNF-elicited superoxide anion production in neutrophils, by direct phosphorylation and activation of NCF1 or indirectly through MAPK1/3 (ERK1/2) signaling pathways (PubMed:18025218). Involved in antifungal immunity by mediating phosphorylation and activation of CARD9 downstream of C-type lectin receptors activation, promoting interaction between CARD9 and BCL10, followed by activation of NF-kappa-B and MAP kinase p38 pathways (PubMed:22265677). May also play a role in the regulation of NADPH oxidase activity in eosinophil after stimulation with IL5, leukotriene B4 or PMA. In collagen-induced platelet aggregation, acts a negative regulator of filopodia formation and actin polymerization by interacting with and negatively regulating VASP phosphorylation. Downstream of PAR1, PAR4 and CD36/GP4 receptors, regulates differentially platelet dense granule secretion; acts as a positive regulator in PAR-mediated granule secretion, whereas it negatively regulates CD36/GP4-mediated granule release. Phosphorylates MUC1 in the C-terminal and regulates the interaction between MUC1 and beta-catenin. The catalytic subunit phosphorylates 14-3-3 proteins (YWHAB, YWHAZ and YWHAH) in a sphingosine-dependent fashion (PubMed:9705322). Phosphorylates ELAVL1 in response to angiotensin-2 treatment (By similarity). Phosphorylates mitochondrial phospholipid scramblase 3 (PLSCR3), resulting in increased cardiolipin expression on the mitochondrial outer membrane which facilitates apoptosis (By similarity). Phosphorylates SMPD1 which induces SMPD1 secretion (By similarity).</text>
</comment>
<comment type="catalytic activity">
    <reaction>
        <text>L-seryl-[protein] + ATP = O-phospho-L-seryl-[protein] + ADP + H(+)</text>
        <dbReference type="Rhea" id="RHEA:17989"/>
        <dbReference type="Rhea" id="RHEA-COMP:9863"/>
        <dbReference type="Rhea" id="RHEA-COMP:11604"/>
        <dbReference type="ChEBI" id="CHEBI:15378"/>
        <dbReference type="ChEBI" id="CHEBI:29999"/>
        <dbReference type="ChEBI" id="CHEBI:30616"/>
        <dbReference type="ChEBI" id="CHEBI:83421"/>
        <dbReference type="ChEBI" id="CHEBI:456216"/>
        <dbReference type="EC" id="2.7.11.13"/>
    </reaction>
</comment>
<comment type="catalytic activity">
    <reaction evidence="13">
        <text>L-threonyl-[protein] + ATP = O-phospho-L-threonyl-[protein] + ADP + H(+)</text>
        <dbReference type="Rhea" id="RHEA:46608"/>
        <dbReference type="Rhea" id="RHEA-COMP:11060"/>
        <dbReference type="Rhea" id="RHEA-COMP:11605"/>
        <dbReference type="ChEBI" id="CHEBI:15378"/>
        <dbReference type="ChEBI" id="CHEBI:30013"/>
        <dbReference type="ChEBI" id="CHEBI:30616"/>
        <dbReference type="ChEBI" id="CHEBI:61977"/>
        <dbReference type="ChEBI" id="CHEBI:456216"/>
        <dbReference type="EC" id="2.7.11.13"/>
    </reaction>
</comment>
<comment type="catalytic activity">
    <reaction evidence="8">
        <text>L-tyrosyl-[protein] + ATP = O-phospho-L-tyrosyl-[protein] + ADP + H(+)</text>
        <dbReference type="Rhea" id="RHEA:10596"/>
        <dbReference type="Rhea" id="RHEA-COMP:10136"/>
        <dbReference type="Rhea" id="RHEA-COMP:20101"/>
        <dbReference type="ChEBI" id="CHEBI:15378"/>
        <dbReference type="ChEBI" id="CHEBI:30616"/>
        <dbReference type="ChEBI" id="CHEBI:46858"/>
        <dbReference type="ChEBI" id="CHEBI:61978"/>
        <dbReference type="ChEBI" id="CHEBI:456216"/>
        <dbReference type="EC" id="2.7.10.2"/>
    </reaction>
</comment>
<comment type="activity regulation">
    <text evidence="3">Novel PKCs (PRKCD, PRKCE, PRKCH and PRKCQ) are calcium-insensitive, but activated by diacylglycerol (DAG) and phosphatidylserine. Three specific sites; Thr-505 (activation loop of the kinase domain), Ser-643 (turn motif) and Ser-662 (hydrophobic region), need to be phosphorylated for its full activation. Activated by caspase-3 (CASP3) cleavage during apoptosis. After cleavage, the pseudosubstrate motif in the regulatory subunit is released from the substrate recognition site of the catalytic subunit, which enables PRKCD to become constitutively activated. The catalytic subunit which displays properties of a sphingosine-dependent protein kinase is activated by D-erythro-sphingosine (Sph) or N,N-dimethyl-D-erythrosphingosine (DMS) or N,N,N-trimethyl-D-erythrosphingosine (TMS), but not by ceramide or Sph-1-P and is strongly inhibited by phosphatidylserine (By similarity).</text>
</comment>
<comment type="subunit">
    <text evidence="3 14">Interacts with PDPK1 (via N-terminal region) (By similarity). Interacts with RAD9A (By similarity). Interacts with CDCP1 (By similarity). Interacts with MUC1 (By similarity). Interacts with VASP (By similarity). Interacts with CAVIN3 (PubMed:9054438). Interacts with PRKD2 (via N-terminus and zing-finger domain 1 and 2) in response to oxidative stress; the interaction is independent of PRKD2 tyrosine phosphorylation (By similarity). Interacts with PLSC3; interaction is enhanced by UV irradiation (By similarity).</text>
</comment>
<comment type="interaction">
    <interactant intactId="EBI-1551324">
        <id>P28867</id>
    </interactant>
    <interactant intactId="EBI-298630">
        <id>P23242</id>
        <label>Gja1</label>
    </interactant>
    <organismsDiffer>false</organismsDiffer>
    <experiments>4</experiments>
</comment>
<comment type="subcellular location">
    <subcellularLocation>
        <location evidence="3">Cytoplasm</location>
    </subcellularLocation>
    <subcellularLocation>
        <location evidence="3">Cytoplasm</location>
        <location evidence="3">Perinuclear region</location>
    </subcellularLocation>
    <subcellularLocation>
        <location evidence="3">Nucleus</location>
    </subcellularLocation>
    <subcellularLocation>
        <location evidence="3">Cell membrane</location>
        <topology evidence="3">Peripheral membrane protein</topology>
    </subcellularLocation>
    <subcellularLocation>
        <location evidence="3">Mitochondrion</location>
    </subcellularLocation>
    <subcellularLocation>
        <location evidence="3">Endomembrane system</location>
    </subcellularLocation>
    <text evidence="3">Translocates to the mitochondria upon apoptotic stimulation. Upon activation, translocates to the plasma membrane followed by partial location to the endolysosomes.</text>
</comment>
<comment type="alternative products">
    <event type="alternative splicing"/>
    <isoform>
        <id>P28867-1</id>
        <name>1</name>
        <name>PKC-delta-I</name>
        <sequence type="displayed"/>
    </isoform>
    <isoform>
        <id>P28867-2</id>
        <name>2</name>
        <name>PKC-delta-II</name>
        <sequence type="described" ref="VSP_004741"/>
    </isoform>
</comment>
<comment type="tissue specificity">
    <text>Isoform 1 is highly expressed in developing pro- and pre-B-cells and moderately in mature T-cells. Isoform 2 is highly expressed in testis and ovary and at a lower level in thymocytes, brain and kidney.</text>
</comment>
<comment type="domain">
    <text>The C1 domain, containing the phorbol ester/DAG-type region 1 (C1A) and 2 (C1B), is the diacylglycerol sensor.</text>
</comment>
<comment type="domain">
    <text evidence="1">The C2 domain is a non-calcium binding domain. It binds proteins containing phosphotyrosine in a sequence-specific manner (By similarity).</text>
</comment>
<comment type="PTM">
    <text evidence="3 13">Autophosphorylated and/or phosphorylated at Thr-505, within the activation loop; phosphorylation at Thr-505 is not a prerequisite for enzymatic activity (By similarity). Autophosphorylated at Ser-299 (By similarity). Upon TNFSF10/TRAIL treatment, phosphorylated at Tyr-155; phosphorylation is required for its translocation to the endoplasmic reticulum and cleavage by caspase-3 (By similarity). Phosphorylated at Tyr-311, Tyr-332 and Tyr-565; phosphorylation of Tyr-311 and Tyr-565 following thrombin or zymosan stimulation potentiates its kinase activity (By similarity). Phosphorylated by protein kinase PDPK1; phosphorylation is inhibited by the apoptotic C-terminal cleavage product of PKN2 (By similarity). Phosphorylated at Tyr-311 through a SYK and SRC mechanism downstream of C-type lectin receptors activation, promoting its activation (PubMed:22265677).</text>
</comment>
<comment type="PTM">
    <text evidence="1">Proteolytically cleaved into a catalytic subunit and a regulatory subunit by caspase-3 during apoptosis which results in kinase activation.</text>
</comment>
<comment type="disruption phenotype">
    <text evidence="10">Mice are viable up to 1 year despite detection of auto-immune disease in these animals. They exhibit glomerulonephritis, splenomegaly and lymphadenopathy associated with B-cell expansion and defective B-cell tolerance to self-antigen.</text>
</comment>
<comment type="similarity">
    <text evidence="18">Belongs to the protein kinase superfamily. AGC Ser/Thr protein kinase family. PKC subfamily.</text>
</comment>
<dbReference type="EC" id="2.7.11.13" evidence="13"/>
<dbReference type="EC" id="2.7.10.2"/>
<dbReference type="EMBL" id="M69042">
    <property type="protein sequence ID" value="AAA73056.1"/>
    <property type="molecule type" value="mRNA"/>
</dbReference>
<dbReference type="EMBL" id="X60304">
    <property type="protein sequence ID" value="CAA42845.1"/>
    <property type="molecule type" value="mRNA"/>
</dbReference>
<dbReference type="EMBL" id="AF274044">
    <property type="protein sequence ID" value="AAF79208.1"/>
    <property type="molecule type" value="Genomic_DNA"/>
</dbReference>
<dbReference type="EMBL" id="AF251036">
    <property type="protein sequence ID" value="AAF64316.1"/>
    <property type="molecule type" value="mRNA"/>
</dbReference>
<dbReference type="EMBL" id="AB011812">
    <property type="protein sequence ID" value="BAA36408.1"/>
    <property type="molecule type" value="mRNA"/>
</dbReference>
<dbReference type="CCDS" id="CCDS26895.1">
    <molecule id="P28867-1"/>
</dbReference>
<dbReference type="CCDS" id="CCDS79285.1">
    <molecule id="P28867-2"/>
</dbReference>
<dbReference type="PIR" id="A40281">
    <property type="entry name" value="KIMSCD"/>
</dbReference>
<dbReference type="RefSeq" id="NP_001297611.1">
    <molecule id="P28867-2"/>
    <property type="nucleotide sequence ID" value="NM_001310682.1"/>
</dbReference>
<dbReference type="RefSeq" id="NP_001411429.1">
    <molecule id="P28867-1"/>
    <property type="nucleotide sequence ID" value="NM_001424500.1"/>
</dbReference>
<dbReference type="RefSeq" id="NP_035233.1">
    <molecule id="P28867-1"/>
    <property type="nucleotide sequence ID" value="NM_011103.4"/>
</dbReference>
<dbReference type="RefSeq" id="XP_006518758.1">
    <molecule id="P28867-2"/>
    <property type="nucleotide sequence ID" value="XM_006518695.2"/>
</dbReference>
<dbReference type="RefSeq" id="XP_017171407.1">
    <molecule id="P28867-2"/>
    <property type="nucleotide sequence ID" value="XM_017315918.3"/>
</dbReference>
<dbReference type="PDB" id="1PTQ">
    <property type="method" value="X-ray"/>
    <property type="resolution" value="1.95 A"/>
    <property type="chains" value="A=231-280"/>
</dbReference>
<dbReference type="PDB" id="1PTR">
    <property type="method" value="X-ray"/>
    <property type="resolution" value="2.20 A"/>
    <property type="chains" value="A=231-280"/>
</dbReference>
<dbReference type="PDB" id="3UEJ">
    <property type="method" value="X-ray"/>
    <property type="resolution" value="1.30 A"/>
    <property type="chains" value="A/B=231-280"/>
</dbReference>
<dbReference type="PDB" id="3UEY">
    <property type="method" value="X-ray"/>
    <property type="resolution" value="1.30 A"/>
    <property type="chains" value="A/B=231-280"/>
</dbReference>
<dbReference type="PDB" id="3UFF">
    <property type="method" value="X-ray"/>
    <property type="resolution" value="1.30 A"/>
    <property type="chains" value="A/B=231-280"/>
</dbReference>
<dbReference type="PDB" id="3UGD">
    <property type="method" value="X-ray"/>
    <property type="resolution" value="1.45 A"/>
    <property type="chains" value="A/B=231-280"/>
</dbReference>
<dbReference type="PDB" id="3UGI">
    <property type="method" value="X-ray"/>
    <property type="resolution" value="1.36 A"/>
    <property type="chains" value="A/B=231-280"/>
</dbReference>
<dbReference type="PDB" id="3UGL">
    <property type="method" value="X-ray"/>
    <property type="resolution" value="1.36 A"/>
    <property type="chains" value="A/B=231-280"/>
</dbReference>
<dbReference type="PDBsum" id="1PTQ"/>
<dbReference type="PDBsum" id="1PTR"/>
<dbReference type="PDBsum" id="3UEJ"/>
<dbReference type="PDBsum" id="3UEY"/>
<dbReference type="PDBsum" id="3UFF"/>
<dbReference type="PDBsum" id="3UGD"/>
<dbReference type="PDBsum" id="3UGI"/>
<dbReference type="PDBsum" id="3UGL"/>
<dbReference type="SMR" id="P28867"/>
<dbReference type="BioGRID" id="202197">
    <property type="interactions" value="18"/>
</dbReference>
<dbReference type="CORUM" id="P28867"/>
<dbReference type="DIP" id="DIP-1169N"/>
<dbReference type="FunCoup" id="P28867">
    <property type="interactions" value="1086"/>
</dbReference>
<dbReference type="IntAct" id="P28867">
    <property type="interactions" value="6"/>
</dbReference>
<dbReference type="MINT" id="P28867"/>
<dbReference type="STRING" id="10090.ENSMUSP00000107830"/>
<dbReference type="BindingDB" id="P28867"/>
<dbReference type="ChEMBL" id="CHEMBL2560"/>
<dbReference type="iPTMnet" id="P28867"/>
<dbReference type="PhosphoSitePlus" id="P28867"/>
<dbReference type="SwissPalm" id="P28867"/>
<dbReference type="jPOST" id="P28867"/>
<dbReference type="PaxDb" id="10090-ENSMUSP00000107830"/>
<dbReference type="PeptideAtlas" id="P28867"/>
<dbReference type="ProteomicsDB" id="263646">
    <molecule id="P28867-1"/>
</dbReference>
<dbReference type="ProteomicsDB" id="263647">
    <molecule id="P28867-2"/>
</dbReference>
<dbReference type="Pumba" id="P28867"/>
<dbReference type="Antibodypedia" id="664">
    <property type="antibodies" value="1169 antibodies from 46 providers"/>
</dbReference>
<dbReference type="DNASU" id="18753"/>
<dbReference type="Ensembl" id="ENSMUST00000022521.13">
    <molecule id="P28867-2"/>
    <property type="protein sequence ID" value="ENSMUSP00000022521.7"/>
    <property type="gene ID" value="ENSMUSG00000021948.18"/>
</dbReference>
<dbReference type="Ensembl" id="ENSMUST00000112210.11">
    <molecule id="P28867-1"/>
    <property type="protein sequence ID" value="ENSMUSP00000107829.4"/>
    <property type="gene ID" value="ENSMUSG00000021948.18"/>
</dbReference>
<dbReference type="Ensembl" id="ENSMUST00000112211.9">
    <molecule id="P28867-2"/>
    <property type="protein sequence ID" value="ENSMUSP00000107830.3"/>
    <property type="gene ID" value="ENSMUSG00000021948.18"/>
</dbReference>
<dbReference type="GeneID" id="18753"/>
<dbReference type="KEGG" id="mmu:18753"/>
<dbReference type="UCSC" id="uc007sve.2">
    <molecule id="P28867-1"/>
    <property type="organism name" value="mouse"/>
</dbReference>
<dbReference type="UCSC" id="uc007svg.2">
    <molecule id="P28867-2"/>
    <property type="organism name" value="mouse"/>
</dbReference>
<dbReference type="AGR" id="MGI:97598"/>
<dbReference type="CTD" id="5580"/>
<dbReference type="MGI" id="MGI:97598">
    <property type="gene designation" value="Prkcd"/>
</dbReference>
<dbReference type="VEuPathDB" id="HostDB:ENSMUSG00000021948"/>
<dbReference type="eggNOG" id="KOG0694">
    <property type="taxonomic scope" value="Eukaryota"/>
</dbReference>
<dbReference type="GeneTree" id="ENSGT00940000155327"/>
<dbReference type="InParanoid" id="P28867"/>
<dbReference type="OMA" id="FKTINWI"/>
<dbReference type="OrthoDB" id="7644at9989"/>
<dbReference type="PhylomeDB" id="P28867"/>
<dbReference type="TreeFam" id="TF102004"/>
<dbReference type="BRENDA" id="2.7.11.13">
    <property type="organism ID" value="3474"/>
</dbReference>
<dbReference type="Reactome" id="R-MMU-111465">
    <property type="pathway name" value="Apoptotic cleavage of cellular proteins"/>
</dbReference>
<dbReference type="Reactome" id="R-MMU-111933">
    <property type="pathway name" value="Calmodulin induced events"/>
</dbReference>
<dbReference type="Reactome" id="R-MMU-114508">
    <property type="pathway name" value="Effects of PIP2 hydrolysis"/>
</dbReference>
<dbReference type="Reactome" id="R-MMU-1250196">
    <property type="pathway name" value="SHC1 events in ERBB2 signaling"/>
</dbReference>
<dbReference type="Reactome" id="R-MMU-1489509">
    <property type="pathway name" value="DAG and IP3 signaling"/>
</dbReference>
<dbReference type="Reactome" id="R-MMU-2029485">
    <property type="pathway name" value="Role of phospholipids in phagocytosis"/>
</dbReference>
<dbReference type="Reactome" id="R-MMU-450520">
    <property type="pathway name" value="HuR (ELAVL1) binds and stabilizes mRNA"/>
</dbReference>
<dbReference type="Reactome" id="R-MMU-5218921">
    <property type="pathway name" value="VEGFR2 mediated cell proliferation"/>
</dbReference>
<dbReference type="Reactome" id="R-MMU-5607764">
    <property type="pathway name" value="CLEC7A (Dectin-1) signaling"/>
</dbReference>
<dbReference type="Reactome" id="R-MMU-5668599">
    <property type="pathway name" value="RHO GTPases Activate NADPH Oxidases"/>
</dbReference>
<dbReference type="Reactome" id="R-MMU-6798695">
    <property type="pathway name" value="Neutrophil degranulation"/>
</dbReference>
<dbReference type="Reactome" id="R-MMU-877300">
    <property type="pathway name" value="Interferon gamma signaling"/>
</dbReference>
<dbReference type="BioGRID-ORCS" id="18753">
    <property type="hits" value="3 hits in 80 CRISPR screens"/>
</dbReference>
<dbReference type="CD-CODE" id="01CA17F3">
    <property type="entry name" value="Centrosome"/>
</dbReference>
<dbReference type="ChiTaRS" id="Prkcd">
    <property type="organism name" value="mouse"/>
</dbReference>
<dbReference type="EvolutionaryTrace" id="P28867"/>
<dbReference type="PRO" id="PR:P28867"/>
<dbReference type="Proteomes" id="UP000000589">
    <property type="component" value="Chromosome 14"/>
</dbReference>
<dbReference type="RNAct" id="P28867">
    <property type="molecule type" value="protein"/>
</dbReference>
<dbReference type="Bgee" id="ENSMUSG00000021948">
    <property type="expression patterns" value="Expressed in lateral geniculate body and 281 other cell types or tissues"/>
</dbReference>
<dbReference type="ExpressionAtlas" id="P28867">
    <property type="expression patterns" value="baseline and differential"/>
</dbReference>
<dbReference type="GO" id="GO:0005911">
    <property type="term" value="C:cell-cell junction"/>
    <property type="evidence" value="ECO:0000314"/>
    <property type="project" value="MGI"/>
</dbReference>
<dbReference type="GO" id="GO:0005737">
    <property type="term" value="C:cytoplasm"/>
    <property type="evidence" value="ECO:0000314"/>
    <property type="project" value="MGI"/>
</dbReference>
<dbReference type="GO" id="GO:0005829">
    <property type="term" value="C:cytosol"/>
    <property type="evidence" value="ECO:0000250"/>
    <property type="project" value="UniProtKB"/>
</dbReference>
<dbReference type="GO" id="GO:0036019">
    <property type="term" value="C:endolysosome"/>
    <property type="evidence" value="ECO:0000250"/>
    <property type="project" value="UniProtKB"/>
</dbReference>
<dbReference type="GO" id="GO:0005783">
    <property type="term" value="C:endoplasmic reticulum"/>
    <property type="evidence" value="ECO:0000250"/>
    <property type="project" value="UniProtKB"/>
</dbReference>
<dbReference type="GO" id="GO:0016020">
    <property type="term" value="C:membrane"/>
    <property type="evidence" value="ECO:0000314"/>
    <property type="project" value="MGI"/>
</dbReference>
<dbReference type="GO" id="GO:0005739">
    <property type="term" value="C:mitochondrion"/>
    <property type="evidence" value="ECO:0000250"/>
    <property type="project" value="UniProtKB"/>
</dbReference>
<dbReference type="GO" id="GO:0016363">
    <property type="term" value="C:nuclear matrix"/>
    <property type="evidence" value="ECO:0000314"/>
    <property type="project" value="MGI"/>
</dbReference>
<dbReference type="GO" id="GO:0005634">
    <property type="term" value="C:nucleus"/>
    <property type="evidence" value="ECO:0000314"/>
    <property type="project" value="MGI"/>
</dbReference>
<dbReference type="GO" id="GO:0048471">
    <property type="term" value="C:perinuclear region of cytoplasm"/>
    <property type="evidence" value="ECO:0007669"/>
    <property type="project" value="UniProtKB-SubCell"/>
</dbReference>
<dbReference type="GO" id="GO:0005886">
    <property type="term" value="C:plasma membrane"/>
    <property type="evidence" value="ECO:0000250"/>
    <property type="project" value="UniProtKB"/>
</dbReference>
<dbReference type="GO" id="GO:0005524">
    <property type="term" value="F:ATP binding"/>
    <property type="evidence" value="ECO:0007669"/>
    <property type="project" value="UniProtKB-KW"/>
</dbReference>
<dbReference type="GO" id="GO:0004699">
    <property type="term" value="F:diacylglycerol-dependent, calcium-independent serine/threonine kinase activity"/>
    <property type="evidence" value="ECO:0000314"/>
    <property type="project" value="UniProtKB"/>
</dbReference>
<dbReference type="GO" id="GO:0008047">
    <property type="term" value="F:enzyme activator activity"/>
    <property type="evidence" value="ECO:0007669"/>
    <property type="project" value="Ensembl"/>
</dbReference>
<dbReference type="GO" id="GO:0043560">
    <property type="term" value="F:insulin receptor substrate binding"/>
    <property type="evidence" value="ECO:0000353"/>
    <property type="project" value="BHF-UCL"/>
</dbReference>
<dbReference type="GO" id="GO:0004715">
    <property type="term" value="F:non-membrane spanning protein tyrosine kinase activity"/>
    <property type="evidence" value="ECO:0007669"/>
    <property type="project" value="UniProtKB-EC"/>
</dbReference>
<dbReference type="GO" id="GO:0019901">
    <property type="term" value="F:protein kinase binding"/>
    <property type="evidence" value="ECO:0007669"/>
    <property type="project" value="Ensembl"/>
</dbReference>
<dbReference type="GO" id="GO:0106310">
    <property type="term" value="F:protein serine kinase activity"/>
    <property type="evidence" value="ECO:0000250"/>
    <property type="project" value="UniProtKB"/>
</dbReference>
<dbReference type="GO" id="GO:0004674">
    <property type="term" value="F:protein serine/threonine kinase activity"/>
    <property type="evidence" value="ECO:0000314"/>
    <property type="project" value="UniProtKB"/>
</dbReference>
<dbReference type="GO" id="GO:0008270">
    <property type="term" value="F:zinc ion binding"/>
    <property type="evidence" value="ECO:0007669"/>
    <property type="project" value="UniProtKB-KW"/>
</dbReference>
<dbReference type="GO" id="GO:0006915">
    <property type="term" value="P:apoptotic process"/>
    <property type="evidence" value="ECO:0000250"/>
    <property type="project" value="UniProtKB"/>
</dbReference>
<dbReference type="GO" id="GO:0042100">
    <property type="term" value="P:B cell proliferation"/>
    <property type="evidence" value="ECO:0000315"/>
    <property type="project" value="MGI"/>
</dbReference>
<dbReference type="GO" id="GO:0060326">
    <property type="term" value="P:cell chemotaxis"/>
    <property type="evidence" value="ECO:0007669"/>
    <property type="project" value="Ensembl"/>
</dbReference>
<dbReference type="GO" id="GO:1904385">
    <property type="term" value="P:cellular response to angiotensin"/>
    <property type="evidence" value="ECO:0000250"/>
    <property type="project" value="UniProtKB"/>
</dbReference>
<dbReference type="GO" id="GO:0070301">
    <property type="term" value="P:cellular response to hydrogen peroxide"/>
    <property type="evidence" value="ECO:0007669"/>
    <property type="project" value="Ensembl"/>
</dbReference>
<dbReference type="GO" id="GO:0071447">
    <property type="term" value="P:cellular response to hydroperoxide"/>
    <property type="evidence" value="ECO:0007669"/>
    <property type="project" value="Ensembl"/>
</dbReference>
<dbReference type="GO" id="GO:0034644">
    <property type="term" value="P:cellular response to UV"/>
    <property type="evidence" value="ECO:0000250"/>
    <property type="project" value="UniProtKB"/>
</dbReference>
<dbReference type="GO" id="GO:0090398">
    <property type="term" value="P:cellular senescence"/>
    <property type="evidence" value="ECO:0007669"/>
    <property type="project" value="Ensembl"/>
</dbReference>
<dbReference type="GO" id="GO:0042742">
    <property type="term" value="P:defense response to bacterium"/>
    <property type="evidence" value="ECO:0000315"/>
    <property type="project" value="UniProtKB"/>
</dbReference>
<dbReference type="GO" id="GO:0006974">
    <property type="term" value="P:DNA damage response"/>
    <property type="evidence" value="ECO:0007669"/>
    <property type="project" value="Ensembl"/>
</dbReference>
<dbReference type="GO" id="GO:0016064">
    <property type="term" value="P:immunoglobulin mediated immune response"/>
    <property type="evidence" value="ECO:0000315"/>
    <property type="project" value="MGI"/>
</dbReference>
<dbReference type="GO" id="GO:0030837">
    <property type="term" value="P:negative regulation of actin filament polymerization"/>
    <property type="evidence" value="ECO:0000315"/>
    <property type="project" value="UniProtKB"/>
</dbReference>
<dbReference type="GO" id="GO:0051490">
    <property type="term" value="P:negative regulation of filopodium assembly"/>
    <property type="evidence" value="ECO:0000315"/>
    <property type="project" value="UniProtKB"/>
</dbReference>
<dbReference type="GO" id="GO:0034351">
    <property type="term" value="P:negative regulation of glial cell apoptotic process"/>
    <property type="evidence" value="ECO:0000250"/>
    <property type="project" value="UniProtKB"/>
</dbReference>
<dbReference type="GO" id="GO:0050728">
    <property type="term" value="P:negative regulation of inflammatory response"/>
    <property type="evidence" value="ECO:0007669"/>
    <property type="project" value="Ensembl"/>
</dbReference>
<dbReference type="GO" id="GO:0046627">
    <property type="term" value="P:negative regulation of insulin receptor signaling pathway"/>
    <property type="evidence" value="ECO:0000314"/>
    <property type="project" value="BHF-UCL"/>
</dbReference>
<dbReference type="GO" id="GO:0043409">
    <property type="term" value="P:negative regulation of MAPK cascade"/>
    <property type="evidence" value="ECO:0007669"/>
    <property type="project" value="Ensembl"/>
</dbReference>
<dbReference type="GO" id="GO:0090331">
    <property type="term" value="P:negative regulation of platelet aggregation"/>
    <property type="evidence" value="ECO:0000315"/>
    <property type="project" value="UniProtKB"/>
</dbReference>
<dbReference type="GO" id="GO:0042119">
    <property type="term" value="P:neutrophil activation"/>
    <property type="evidence" value="ECO:0007669"/>
    <property type="project" value="Ensembl"/>
</dbReference>
<dbReference type="GO" id="GO:0018105">
    <property type="term" value="P:peptidyl-serine phosphorylation"/>
    <property type="evidence" value="ECO:0000250"/>
    <property type="project" value="UniProtKB"/>
</dbReference>
<dbReference type="GO" id="GO:2001235">
    <property type="term" value="P:positive regulation of apoptotic signaling pathway"/>
    <property type="evidence" value="ECO:0000314"/>
    <property type="project" value="MGI"/>
</dbReference>
<dbReference type="GO" id="GO:2000304">
    <property type="term" value="P:positive regulation of ceramide biosynthetic process"/>
    <property type="evidence" value="ECO:0007669"/>
    <property type="project" value="Ensembl"/>
</dbReference>
<dbReference type="GO" id="GO:2000753">
    <property type="term" value="P:positive regulation of glucosylceramide catabolic process"/>
    <property type="evidence" value="ECO:0007669"/>
    <property type="project" value="Ensembl"/>
</dbReference>
<dbReference type="GO" id="GO:0042307">
    <property type="term" value="P:positive regulation of protein import into nucleus"/>
    <property type="evidence" value="ECO:0007669"/>
    <property type="project" value="Ensembl"/>
</dbReference>
<dbReference type="GO" id="GO:2000755">
    <property type="term" value="P:positive regulation of sphingomyelin catabolic process"/>
    <property type="evidence" value="ECO:0007669"/>
    <property type="project" value="Ensembl"/>
</dbReference>
<dbReference type="GO" id="GO:0032930">
    <property type="term" value="P:positive regulation of superoxide anion generation"/>
    <property type="evidence" value="ECO:0000250"/>
    <property type="project" value="UniProtKB"/>
</dbReference>
<dbReference type="GO" id="GO:0043687">
    <property type="term" value="P:post-translational protein modification"/>
    <property type="evidence" value="ECO:0007669"/>
    <property type="project" value="Ensembl"/>
</dbReference>
<dbReference type="GO" id="GO:0070528">
    <property type="term" value="P:protein kinase C signaling"/>
    <property type="evidence" value="ECO:0000314"/>
    <property type="project" value="BHF-UCL"/>
</dbReference>
<dbReference type="GO" id="GO:2000303">
    <property type="term" value="P:regulation of ceramide biosynthetic process"/>
    <property type="evidence" value="ECO:0000250"/>
    <property type="project" value="UniProtKB"/>
</dbReference>
<dbReference type="GO" id="GO:0023021">
    <property type="term" value="P:termination of signal transduction"/>
    <property type="evidence" value="ECO:0007669"/>
    <property type="project" value="Ensembl"/>
</dbReference>
<dbReference type="CDD" id="cd20834">
    <property type="entry name" value="C1_nPKC_theta-like_rpt1"/>
    <property type="match status" value="1"/>
</dbReference>
<dbReference type="CDD" id="cd20837">
    <property type="entry name" value="C1_nPKC_theta-like_rpt2"/>
    <property type="match status" value="1"/>
</dbReference>
<dbReference type="FunFam" id="3.30.200.20:FF:000360">
    <property type="entry name" value="Protein kinase C"/>
    <property type="match status" value="1"/>
</dbReference>
<dbReference type="FunFam" id="3.30.60.20:FF:000003">
    <property type="entry name" value="Protein kinase C delta"/>
    <property type="match status" value="1"/>
</dbReference>
<dbReference type="FunFam" id="2.60.40.150:FF:000049">
    <property type="entry name" value="Protein kinase C delta type"/>
    <property type="match status" value="1"/>
</dbReference>
<dbReference type="FunFam" id="3.30.60.20:FF:000008">
    <property type="entry name" value="Protein kinase C theta"/>
    <property type="match status" value="1"/>
</dbReference>
<dbReference type="FunFam" id="1.10.510.10:FF:000150">
    <property type="entry name" value="Protein kinase C, theta"/>
    <property type="match status" value="1"/>
</dbReference>
<dbReference type="Gene3D" id="3.30.60.20">
    <property type="match status" value="2"/>
</dbReference>
<dbReference type="Gene3D" id="2.60.40.150">
    <property type="entry name" value="C2 domain"/>
    <property type="match status" value="1"/>
</dbReference>
<dbReference type="Gene3D" id="3.30.200.20">
    <property type="entry name" value="Phosphorylase Kinase, domain 1"/>
    <property type="match status" value="1"/>
</dbReference>
<dbReference type="Gene3D" id="1.10.510.10">
    <property type="entry name" value="Transferase(Phosphotransferase) domain 1"/>
    <property type="match status" value="1"/>
</dbReference>
<dbReference type="InterPro" id="IPR000961">
    <property type="entry name" value="AGC-kinase_C"/>
</dbReference>
<dbReference type="InterPro" id="IPR046349">
    <property type="entry name" value="C1-like_sf"/>
</dbReference>
<dbReference type="InterPro" id="IPR000008">
    <property type="entry name" value="C2_dom"/>
</dbReference>
<dbReference type="InterPro" id="IPR035892">
    <property type="entry name" value="C2_domain_sf"/>
</dbReference>
<dbReference type="InterPro" id="IPR020454">
    <property type="entry name" value="DAG/PE-bd"/>
</dbReference>
<dbReference type="InterPro" id="IPR011009">
    <property type="entry name" value="Kinase-like_dom_sf"/>
</dbReference>
<dbReference type="InterPro" id="IPR002219">
    <property type="entry name" value="PE/DAG-bd"/>
</dbReference>
<dbReference type="InterPro" id="IPR027436">
    <property type="entry name" value="PKC_delta"/>
</dbReference>
<dbReference type="InterPro" id="IPR017892">
    <property type="entry name" value="Pkinase_C"/>
</dbReference>
<dbReference type="InterPro" id="IPR014376">
    <property type="entry name" value="Prot_kin_PKC_delta"/>
</dbReference>
<dbReference type="InterPro" id="IPR000719">
    <property type="entry name" value="Prot_kinase_dom"/>
</dbReference>
<dbReference type="InterPro" id="IPR017441">
    <property type="entry name" value="Protein_kinase_ATP_BS"/>
</dbReference>
<dbReference type="InterPro" id="IPR008271">
    <property type="entry name" value="Ser/Thr_kinase_AS"/>
</dbReference>
<dbReference type="PANTHER" id="PTHR24351">
    <property type="entry name" value="RIBOSOMAL PROTEIN S6 KINASE"/>
    <property type="match status" value="1"/>
</dbReference>
<dbReference type="Pfam" id="PF00130">
    <property type="entry name" value="C1_1"/>
    <property type="match status" value="2"/>
</dbReference>
<dbReference type="Pfam" id="PF21494">
    <property type="entry name" value="PKC_C2"/>
    <property type="match status" value="1"/>
</dbReference>
<dbReference type="Pfam" id="PF00069">
    <property type="entry name" value="Pkinase"/>
    <property type="match status" value="1"/>
</dbReference>
<dbReference type="Pfam" id="PF00433">
    <property type="entry name" value="Pkinase_C"/>
    <property type="match status" value="1"/>
</dbReference>
<dbReference type="PIRSF" id="PIRSF000551">
    <property type="entry name" value="PKC_delta"/>
    <property type="match status" value="1"/>
</dbReference>
<dbReference type="PIRSF" id="PIRSF501104">
    <property type="entry name" value="Protein_kin_C_delta"/>
    <property type="match status" value="1"/>
</dbReference>
<dbReference type="PRINTS" id="PR00008">
    <property type="entry name" value="DAGPEDOMAIN"/>
</dbReference>
<dbReference type="SMART" id="SM00109">
    <property type="entry name" value="C1"/>
    <property type="match status" value="2"/>
</dbReference>
<dbReference type="SMART" id="SM00133">
    <property type="entry name" value="S_TK_X"/>
    <property type="match status" value="1"/>
</dbReference>
<dbReference type="SMART" id="SM00220">
    <property type="entry name" value="S_TKc"/>
    <property type="match status" value="1"/>
</dbReference>
<dbReference type="SUPFAM" id="SSF49562">
    <property type="entry name" value="C2 domain (Calcium/lipid-binding domain, CaLB)"/>
    <property type="match status" value="1"/>
</dbReference>
<dbReference type="SUPFAM" id="SSF57889">
    <property type="entry name" value="Cysteine-rich domain"/>
    <property type="match status" value="2"/>
</dbReference>
<dbReference type="SUPFAM" id="SSF56112">
    <property type="entry name" value="Protein kinase-like (PK-like)"/>
    <property type="match status" value="1"/>
</dbReference>
<dbReference type="PROSITE" id="PS51285">
    <property type="entry name" value="AGC_KINASE_CTER"/>
    <property type="match status" value="1"/>
</dbReference>
<dbReference type="PROSITE" id="PS50004">
    <property type="entry name" value="C2"/>
    <property type="match status" value="1"/>
</dbReference>
<dbReference type="PROSITE" id="PS00107">
    <property type="entry name" value="PROTEIN_KINASE_ATP"/>
    <property type="match status" value="1"/>
</dbReference>
<dbReference type="PROSITE" id="PS50011">
    <property type="entry name" value="PROTEIN_KINASE_DOM"/>
    <property type="match status" value="1"/>
</dbReference>
<dbReference type="PROSITE" id="PS00108">
    <property type="entry name" value="PROTEIN_KINASE_ST"/>
    <property type="match status" value="1"/>
</dbReference>
<dbReference type="PROSITE" id="PS00479">
    <property type="entry name" value="ZF_DAG_PE_1"/>
    <property type="match status" value="2"/>
</dbReference>
<dbReference type="PROSITE" id="PS50081">
    <property type="entry name" value="ZF_DAG_PE_2"/>
    <property type="match status" value="2"/>
</dbReference>
<feature type="chain" id="PRO_0000055695" description="Protein kinase C delta type">
    <location>
        <begin position="1"/>
        <end position="674"/>
    </location>
</feature>
<feature type="chain" id="PRO_0000421669" description="Protein kinase C delta type regulatory subunit" evidence="1">
    <location>
        <begin position="1"/>
        <end position="327"/>
    </location>
</feature>
<feature type="chain" id="PRO_0000421670" description="Protein kinase C delta type catalytic subunit" evidence="1">
    <location>
        <begin position="328"/>
        <end position="674"/>
    </location>
</feature>
<feature type="domain" description="C2" evidence="4">
    <location>
        <begin position="1"/>
        <end position="106"/>
    </location>
</feature>
<feature type="domain" description="Protein kinase" evidence="5">
    <location>
        <begin position="347"/>
        <end position="601"/>
    </location>
</feature>
<feature type="domain" description="AGC-kinase C-terminal" evidence="7">
    <location>
        <begin position="602"/>
        <end position="673"/>
    </location>
</feature>
<feature type="zinc finger region" description="Phorbol-ester/DAG-type 1" evidence="6">
    <location>
        <begin position="158"/>
        <end position="208"/>
    </location>
</feature>
<feature type="zinc finger region" description="Phorbol-ester/DAG-type 2" evidence="6">
    <location>
        <begin position="230"/>
        <end position="280"/>
    </location>
</feature>
<feature type="active site" description="Proton acceptor" evidence="5 8">
    <location>
        <position position="471"/>
    </location>
</feature>
<feature type="binding site" evidence="5">
    <location>
        <begin position="353"/>
        <end position="361"/>
    </location>
    <ligand>
        <name>ATP</name>
        <dbReference type="ChEBI" id="CHEBI:30616"/>
    </ligand>
</feature>
<feature type="binding site" evidence="5">
    <location>
        <position position="376"/>
    </location>
    <ligand>
        <name>ATP</name>
        <dbReference type="ChEBI" id="CHEBI:30616"/>
    </ligand>
</feature>
<feature type="site" description="Interaction with phosphotyrosine-containing peptide" evidence="1">
    <location>
        <position position="48"/>
    </location>
</feature>
<feature type="site" description="Interaction with phosphotyrosine-containing peptide" evidence="1">
    <location>
        <position position="62"/>
    </location>
</feature>
<feature type="site" description="Interaction with phosphotyrosine-containing peptide" evidence="1">
    <location>
        <position position="67"/>
    </location>
</feature>
<feature type="site" description="Interaction with phosphotyrosine-containing peptide" evidence="1">
    <location>
        <position position="123"/>
    </location>
</feature>
<feature type="site" description="Cleavage; by caspase-3" evidence="1">
    <location>
        <begin position="327"/>
        <end position="328"/>
    </location>
</feature>
<feature type="modified residue" description="Phosphothreonine" evidence="23">
    <location>
        <position position="43"/>
    </location>
</feature>
<feature type="modified residue" description="Phosphothreonine" evidence="3">
    <location>
        <position position="50"/>
    </location>
</feature>
<feature type="modified residue" description="Phosphotyrosine" evidence="2">
    <location>
        <position position="64"/>
    </location>
</feature>
<feature type="modified residue" description="Phosphoserine" evidence="3">
    <location>
        <position position="130"/>
    </location>
</feature>
<feature type="modified residue" description="Phosphothreonine" evidence="3">
    <location>
        <position position="141"/>
    </location>
</feature>
<feature type="modified residue" description="Phosphotyrosine" evidence="3">
    <location>
        <position position="155"/>
    </location>
</feature>
<feature type="modified residue" description="Phosphothreonine" evidence="3">
    <location>
        <position position="218"/>
    </location>
</feature>
<feature type="modified residue" description="Phosphoserine; by autocatalysis" evidence="3">
    <location>
        <position position="299"/>
    </location>
</feature>
<feature type="modified residue" description="Phosphotyrosine; by SRC" evidence="13 20 21 22 23 24">
    <location>
        <position position="311"/>
    </location>
</feature>
<feature type="modified residue" description="Phosphotyrosine; by SRC" evidence="2">
    <location>
        <position position="332"/>
    </location>
</feature>
<feature type="modified residue" description="Phosphotyrosine" evidence="3">
    <location>
        <position position="372"/>
    </location>
</feature>
<feature type="modified residue" description="Phosphothreonine" evidence="3">
    <location>
        <position position="449"/>
    </location>
</feature>
<feature type="modified residue" description="Phosphoserine" evidence="3">
    <location>
        <position position="504"/>
    </location>
</feature>
<feature type="modified residue" description="Phosphothreonine; by autocatalysis" evidence="11 16 24">
    <location>
        <position position="505"/>
    </location>
</feature>
<feature type="modified residue" description="Phosphotyrosine" evidence="3">
    <location>
        <position position="565"/>
    </location>
</feature>
<feature type="modified residue" description="Phosphoserine" evidence="24">
    <location>
        <position position="643"/>
    </location>
</feature>
<feature type="modified residue" description="Phosphoserine" evidence="3">
    <location>
        <position position="652"/>
    </location>
</feature>
<feature type="modified residue" description="Phosphoserine" evidence="23 24">
    <location>
        <position position="662"/>
    </location>
</feature>
<feature type="splice variant" id="VSP_004741" description="In isoform 2." evidence="17">
    <original>L</original>
    <variation>LGEAGSHISLKLSFPSRAKEKDSSETC</variation>
    <location>
        <position position="326"/>
    </location>
</feature>
<feature type="sequence conflict" description="In Ref. 4; BAA36408." evidence="18" ref="4">
    <original>N</original>
    <variation>I</variation>
    <location>
        <position position="214"/>
    </location>
</feature>
<feature type="sequence conflict" description="In Ref. 4; BAA36408." evidence="18" ref="4">
    <original>N</original>
    <variation>S</variation>
    <location>
        <position position="226"/>
    </location>
</feature>
<feature type="sequence conflict" description="In Ref. 1; AAA73056." evidence="18" ref="1">
    <original>E</original>
    <variation>D</variation>
    <location>
        <position position="319"/>
    </location>
</feature>
<feature type="sequence conflict" description="In Ref. 1; AAA73056." evidence="18" ref="1">
    <original>G</original>
    <variation>W</variation>
    <location>
        <position position="330"/>
    </location>
</feature>
<feature type="sequence conflict" description="In Ref. 1; AAA73056." evidence="18" ref="1">
    <original>E</original>
    <variation>V</variation>
    <location>
        <position position="337"/>
    </location>
</feature>
<feature type="sequence conflict" description="In Ref. 1; AAA73056." evidence="18" ref="1">
    <original>G</original>
    <variation>D</variation>
    <location>
        <position position="501"/>
    </location>
</feature>
<feature type="sequence conflict" description="In Ref. 1; AAA73056." evidence="18" ref="1">
    <original>A</original>
    <variation>P</variation>
    <location>
        <position position="503"/>
    </location>
</feature>
<feature type="sequence conflict" description="In Ref. 1; AAA73056." evidence="18" ref="1">
    <original>I</original>
    <variation>S</variation>
    <location>
        <position position="513"/>
    </location>
</feature>
<feature type="sequence conflict" description="In Ref. 4; BAA36408." evidence="18" ref="4">
    <original>LQG</original>
    <variation>PARA</variation>
    <location>
        <begin position="518"/>
        <end position="520"/>
    </location>
</feature>
<feature type="sequence conflict" description="In Ref. 4; BAA36408." evidence="18" ref="4">
    <original>E</original>
    <variation>R</variation>
    <location>
        <position position="538"/>
    </location>
</feature>
<feature type="strand" evidence="25">
    <location>
        <begin position="233"/>
        <end position="236"/>
    </location>
</feature>
<feature type="turn" evidence="25">
    <location>
        <begin position="245"/>
        <end position="247"/>
    </location>
</feature>
<feature type="strand" evidence="25">
    <location>
        <begin position="253"/>
        <end position="256"/>
    </location>
</feature>
<feature type="strand" evidence="25">
    <location>
        <begin position="258"/>
        <end position="261"/>
    </location>
</feature>
<feature type="turn" evidence="25">
    <location>
        <begin position="262"/>
        <end position="264"/>
    </location>
</feature>
<feature type="helix" evidence="25">
    <location>
        <begin position="270"/>
        <end position="273"/>
    </location>
</feature>
<feature type="strand" evidence="25">
    <location>
        <begin position="278"/>
        <end position="280"/>
    </location>
</feature>
<protein>
    <recommendedName>
        <fullName evidence="18">Protein kinase C delta type</fullName>
        <ecNumber evidence="13">2.7.11.13</ecNumber>
    </recommendedName>
    <alternativeName>
        <fullName>Tyrosine-protein kinase PRKCD</fullName>
        <ecNumber>2.7.10.2</ecNumber>
    </alternativeName>
    <alternativeName>
        <fullName>nPKC-delta</fullName>
    </alternativeName>
    <component>
        <recommendedName>
            <fullName>Protein kinase C delta type regulatory subunit</fullName>
        </recommendedName>
    </component>
    <component>
        <recommendedName>
            <fullName>Protein kinase C delta type catalytic subunit</fullName>
        </recommendedName>
        <alternativeName>
            <fullName>Sphingosine-dependent protein kinase-1</fullName>
            <shortName>SDK1</shortName>
        </alternativeName>
    </component>
</protein>
<organism>
    <name type="scientific">Mus musculus</name>
    <name type="common">Mouse</name>
    <dbReference type="NCBI Taxonomy" id="10090"/>
    <lineage>
        <taxon>Eukaryota</taxon>
        <taxon>Metazoa</taxon>
        <taxon>Chordata</taxon>
        <taxon>Craniata</taxon>
        <taxon>Vertebrata</taxon>
        <taxon>Euteleostomi</taxon>
        <taxon>Mammalia</taxon>
        <taxon>Eutheria</taxon>
        <taxon>Euarchontoglires</taxon>
        <taxon>Glires</taxon>
        <taxon>Rodentia</taxon>
        <taxon>Myomorpha</taxon>
        <taxon>Muroidea</taxon>
        <taxon>Muridae</taxon>
        <taxon>Murinae</taxon>
        <taxon>Mus</taxon>
        <taxon>Mus</taxon>
    </lineage>
</organism>
<sequence length="674" mass="77547">MAPFLRISFNSYELGSLQVEDEASQPFCAVKMKEALSTERGKTLVQKKPTMYPEWKTTFDAHIYEGRVIQIVLMRAAEDPVSEVTVGVSVLAERCKKNNGKAEFWLDLQPQAKVLMCVQYFLEDGDCKQSMRSEEEAKFPTMNRRGAIKQAKIHYIKNHEFIATFFGQPTFCSVCKEFVWGLNKQGYKCRQCNAAIHKKCIDKIIGRCTGTATNSRDTIFQKERFNIDMPHRFKVYNYMSPTFCDHCGSLLWGLVKQGLKCEDCGMNVHHKCREKVANLCGINQKLLAEALNQVTQRSSRKLDTTESVGIYQGFEKKPEVSGSDILDNNGTYGKIWEGSTRCTLENFTFQKVLGKGSFGKVLLAELKGKDKYFAIKCLKKDVVLIDDDVECTMVEKRVLALAWESPFLTHLICTFQTKDHLFFVMEFLNGGDLMFHIQDKGRFELYRATFYAAEIICGLQFLHSKGIIYRDLKLDNVMLDRDGHIKIADFGMCKENIFGEGRASTFCGTPDYIAPEILQGLKYSFSVDWWSFGVLLYEMLIGQSPFHGDDEDELFESIRVDTPHYPRWITKESKDIMEKLFERDPDKRLGVTGNIRIHPFFKTINWSLLEKRKVEPPFKPKVKSPSDYSNFDPEFLNEKPQLSFSDKNLIDSMDQEAFHGFSFVNPKFEQFLDI</sequence>